<accession>B9KGM2</accession>
<proteinExistence type="inferred from homology"/>
<organism>
    <name type="scientific">Anaplasma marginale (strain Florida)</name>
    <dbReference type="NCBI Taxonomy" id="320483"/>
    <lineage>
        <taxon>Bacteria</taxon>
        <taxon>Pseudomonadati</taxon>
        <taxon>Pseudomonadota</taxon>
        <taxon>Alphaproteobacteria</taxon>
        <taxon>Rickettsiales</taxon>
        <taxon>Anaplasmataceae</taxon>
        <taxon>Anaplasma</taxon>
    </lineage>
</organism>
<keyword id="KW-0001">2Fe-2S</keyword>
<keyword id="KW-0004">4Fe-4S</keyword>
<keyword id="KW-0093">Biotin biosynthesis</keyword>
<keyword id="KW-0408">Iron</keyword>
<keyword id="KW-0411">Iron-sulfur</keyword>
<keyword id="KW-0479">Metal-binding</keyword>
<keyword id="KW-1185">Reference proteome</keyword>
<keyword id="KW-0949">S-adenosyl-L-methionine</keyword>
<keyword id="KW-0808">Transferase</keyword>
<protein>
    <recommendedName>
        <fullName evidence="1">Biotin synthase</fullName>
        <ecNumber evidence="1">2.8.1.6</ecNumber>
    </recommendedName>
</protein>
<comment type="function">
    <text evidence="1">Catalyzes the conversion of dethiobiotin (DTB) to biotin by the insertion of a sulfur atom into dethiobiotin via a radical-based mechanism.</text>
</comment>
<comment type="catalytic activity">
    <reaction evidence="1">
        <text>(4R,5S)-dethiobiotin + (sulfur carrier)-SH + 2 reduced [2Fe-2S]-[ferredoxin] + 2 S-adenosyl-L-methionine = (sulfur carrier)-H + biotin + 2 5'-deoxyadenosine + 2 L-methionine + 2 oxidized [2Fe-2S]-[ferredoxin]</text>
        <dbReference type="Rhea" id="RHEA:22060"/>
        <dbReference type="Rhea" id="RHEA-COMP:10000"/>
        <dbReference type="Rhea" id="RHEA-COMP:10001"/>
        <dbReference type="Rhea" id="RHEA-COMP:14737"/>
        <dbReference type="Rhea" id="RHEA-COMP:14739"/>
        <dbReference type="ChEBI" id="CHEBI:17319"/>
        <dbReference type="ChEBI" id="CHEBI:29917"/>
        <dbReference type="ChEBI" id="CHEBI:33737"/>
        <dbReference type="ChEBI" id="CHEBI:33738"/>
        <dbReference type="ChEBI" id="CHEBI:57586"/>
        <dbReference type="ChEBI" id="CHEBI:57844"/>
        <dbReference type="ChEBI" id="CHEBI:59789"/>
        <dbReference type="ChEBI" id="CHEBI:64428"/>
        <dbReference type="ChEBI" id="CHEBI:149473"/>
        <dbReference type="EC" id="2.8.1.6"/>
    </reaction>
</comment>
<comment type="cofactor">
    <cofactor evidence="1">
        <name>[4Fe-4S] cluster</name>
        <dbReference type="ChEBI" id="CHEBI:49883"/>
    </cofactor>
    <text evidence="1">Binds 1 [4Fe-4S] cluster. The cluster is coordinated with 3 cysteines and an exchangeable S-adenosyl-L-methionine.</text>
</comment>
<comment type="cofactor">
    <cofactor evidence="1">
        <name>[2Fe-2S] cluster</name>
        <dbReference type="ChEBI" id="CHEBI:190135"/>
    </cofactor>
    <text evidence="1">Binds 1 [2Fe-2S] cluster. The cluster is coordinated with 3 cysteines and 1 arginine.</text>
</comment>
<comment type="pathway">
    <text evidence="1">Cofactor biosynthesis; biotin biosynthesis; biotin from 7,8-diaminononanoate: step 2/2.</text>
</comment>
<comment type="subunit">
    <text evidence="1">Homodimer.</text>
</comment>
<comment type="similarity">
    <text evidence="1">Belongs to the radical SAM superfamily. Biotin synthase family.</text>
</comment>
<gene>
    <name evidence="1" type="primary">bioB</name>
    <name type="ordered locus">AMF_742</name>
</gene>
<evidence type="ECO:0000255" key="1">
    <source>
        <dbReference type="HAMAP-Rule" id="MF_01694"/>
    </source>
</evidence>
<evidence type="ECO:0000255" key="2">
    <source>
        <dbReference type="PROSITE-ProRule" id="PRU01266"/>
    </source>
</evidence>
<reference key="1">
    <citation type="journal article" date="2009" name="BMC Genomics">
        <title>Conservation in the face of diversity: multistrain analysis of an intracellular bacterium.</title>
        <authorList>
            <person name="Dark M.J."/>
            <person name="Herndon D.R."/>
            <person name="Kappmeyer L.S."/>
            <person name="Gonzales M.P."/>
            <person name="Nordeen E."/>
            <person name="Palmer G.H."/>
            <person name="Knowles D.P. Jr."/>
            <person name="Brayton K.A."/>
        </authorList>
    </citation>
    <scope>NUCLEOTIDE SEQUENCE [LARGE SCALE GENOMIC DNA]</scope>
    <source>
        <strain>Florida</strain>
    </source>
</reference>
<name>BIOB_ANAMF</name>
<dbReference type="EC" id="2.8.1.6" evidence="1"/>
<dbReference type="EMBL" id="CP001079">
    <property type="protein sequence ID" value="ACM49576.1"/>
    <property type="molecule type" value="Genomic_DNA"/>
</dbReference>
<dbReference type="RefSeq" id="WP_010265738.1">
    <property type="nucleotide sequence ID" value="NZ_AFMS01000129.1"/>
</dbReference>
<dbReference type="SMR" id="B9KGM2"/>
<dbReference type="STRING" id="320483.AMF_742"/>
<dbReference type="GeneID" id="7397922"/>
<dbReference type="KEGG" id="amf:AMF_742"/>
<dbReference type="eggNOG" id="COG0502">
    <property type="taxonomic scope" value="Bacteria"/>
</dbReference>
<dbReference type="HOGENOM" id="CLU_033172_1_2_5"/>
<dbReference type="UniPathway" id="UPA00078">
    <property type="reaction ID" value="UER00162"/>
</dbReference>
<dbReference type="Proteomes" id="UP000007307">
    <property type="component" value="Chromosome"/>
</dbReference>
<dbReference type="GO" id="GO:0051537">
    <property type="term" value="F:2 iron, 2 sulfur cluster binding"/>
    <property type="evidence" value="ECO:0007669"/>
    <property type="project" value="UniProtKB-KW"/>
</dbReference>
<dbReference type="GO" id="GO:0051539">
    <property type="term" value="F:4 iron, 4 sulfur cluster binding"/>
    <property type="evidence" value="ECO:0007669"/>
    <property type="project" value="UniProtKB-KW"/>
</dbReference>
<dbReference type="GO" id="GO:0004076">
    <property type="term" value="F:biotin synthase activity"/>
    <property type="evidence" value="ECO:0007669"/>
    <property type="project" value="UniProtKB-UniRule"/>
</dbReference>
<dbReference type="GO" id="GO:0005506">
    <property type="term" value="F:iron ion binding"/>
    <property type="evidence" value="ECO:0007669"/>
    <property type="project" value="UniProtKB-UniRule"/>
</dbReference>
<dbReference type="GO" id="GO:0009102">
    <property type="term" value="P:biotin biosynthetic process"/>
    <property type="evidence" value="ECO:0007669"/>
    <property type="project" value="UniProtKB-UniRule"/>
</dbReference>
<dbReference type="CDD" id="cd01335">
    <property type="entry name" value="Radical_SAM"/>
    <property type="match status" value="1"/>
</dbReference>
<dbReference type="Gene3D" id="3.20.20.70">
    <property type="entry name" value="Aldolase class I"/>
    <property type="match status" value="1"/>
</dbReference>
<dbReference type="HAMAP" id="MF_01694">
    <property type="entry name" value="BioB"/>
    <property type="match status" value="1"/>
</dbReference>
<dbReference type="InterPro" id="IPR013785">
    <property type="entry name" value="Aldolase_TIM"/>
</dbReference>
<dbReference type="InterPro" id="IPR010722">
    <property type="entry name" value="BATS_dom"/>
</dbReference>
<dbReference type="InterPro" id="IPR002684">
    <property type="entry name" value="Biotin_synth/BioAB"/>
</dbReference>
<dbReference type="InterPro" id="IPR024177">
    <property type="entry name" value="Biotin_synthase"/>
</dbReference>
<dbReference type="InterPro" id="IPR006638">
    <property type="entry name" value="Elp3/MiaA/NifB-like_rSAM"/>
</dbReference>
<dbReference type="InterPro" id="IPR007197">
    <property type="entry name" value="rSAM"/>
</dbReference>
<dbReference type="NCBIfam" id="TIGR00433">
    <property type="entry name" value="bioB"/>
    <property type="match status" value="1"/>
</dbReference>
<dbReference type="PANTHER" id="PTHR22976">
    <property type="entry name" value="BIOTIN SYNTHASE"/>
    <property type="match status" value="1"/>
</dbReference>
<dbReference type="PANTHER" id="PTHR22976:SF2">
    <property type="entry name" value="BIOTIN SYNTHASE, MITOCHONDRIAL"/>
    <property type="match status" value="1"/>
</dbReference>
<dbReference type="Pfam" id="PF06968">
    <property type="entry name" value="BATS"/>
    <property type="match status" value="1"/>
</dbReference>
<dbReference type="Pfam" id="PF04055">
    <property type="entry name" value="Radical_SAM"/>
    <property type="match status" value="1"/>
</dbReference>
<dbReference type="PIRSF" id="PIRSF001619">
    <property type="entry name" value="Biotin_synth"/>
    <property type="match status" value="1"/>
</dbReference>
<dbReference type="SFLD" id="SFLDF00272">
    <property type="entry name" value="biotin_synthase"/>
    <property type="match status" value="1"/>
</dbReference>
<dbReference type="SFLD" id="SFLDG01278">
    <property type="entry name" value="biotin_synthase_like"/>
    <property type="match status" value="1"/>
</dbReference>
<dbReference type="SMART" id="SM00876">
    <property type="entry name" value="BATS"/>
    <property type="match status" value="1"/>
</dbReference>
<dbReference type="SMART" id="SM00729">
    <property type="entry name" value="Elp3"/>
    <property type="match status" value="1"/>
</dbReference>
<dbReference type="SUPFAM" id="SSF102114">
    <property type="entry name" value="Radical SAM enzymes"/>
    <property type="match status" value="1"/>
</dbReference>
<dbReference type="PROSITE" id="PS51918">
    <property type="entry name" value="RADICAL_SAM"/>
    <property type="match status" value="1"/>
</dbReference>
<sequence length="324" mass="36039">MIRNNWTLEEALELFRMPFSDLILKAHSVHVQNFRNNEVQVAALMNIKTGSCPENCRYCAQSAHYNTGLEKKSLSTVEEVKTAAKRAKEIGADRFCFAAAWRNLHDRDLEKICQFVEAIKSEGLESCASLGMLKLDQAQKLKESGLDFYNHNVDTSREFYHNVVTTRTYEERLETVRNVQQAGIKVCCGGILGMGESTEDRASMLVTLANLEQHPLSVPINRLVPIEGTPMEGNPKIDNIDFVRTIAVARIMMPASYVRLAAGRGEMSEEMQALCMLAGANSIFCGEKLLTTPNARPEDDQRLFSQLGITPSRAACTTSDAQLA</sequence>
<feature type="chain" id="PRO_0000381198" description="Biotin synthase">
    <location>
        <begin position="1"/>
        <end position="324"/>
    </location>
</feature>
<feature type="domain" description="Radical SAM core" evidence="2">
    <location>
        <begin position="37"/>
        <end position="264"/>
    </location>
</feature>
<feature type="binding site" evidence="1">
    <location>
        <position position="52"/>
    </location>
    <ligand>
        <name>[4Fe-4S] cluster</name>
        <dbReference type="ChEBI" id="CHEBI:49883"/>
        <note>4Fe-4S-S-AdoMet</note>
    </ligand>
</feature>
<feature type="binding site" evidence="1">
    <location>
        <position position="56"/>
    </location>
    <ligand>
        <name>[4Fe-4S] cluster</name>
        <dbReference type="ChEBI" id="CHEBI:49883"/>
        <note>4Fe-4S-S-AdoMet</note>
    </ligand>
</feature>
<feature type="binding site" evidence="1">
    <location>
        <position position="59"/>
    </location>
    <ligand>
        <name>[4Fe-4S] cluster</name>
        <dbReference type="ChEBI" id="CHEBI:49883"/>
        <note>4Fe-4S-S-AdoMet</note>
    </ligand>
</feature>
<feature type="binding site" evidence="1">
    <location>
        <position position="96"/>
    </location>
    <ligand>
        <name>[2Fe-2S] cluster</name>
        <dbReference type="ChEBI" id="CHEBI:190135"/>
    </ligand>
</feature>
<feature type="binding site" evidence="1">
    <location>
        <position position="127"/>
    </location>
    <ligand>
        <name>[2Fe-2S] cluster</name>
        <dbReference type="ChEBI" id="CHEBI:190135"/>
    </ligand>
</feature>
<feature type="binding site" evidence="1">
    <location>
        <position position="187"/>
    </location>
    <ligand>
        <name>[2Fe-2S] cluster</name>
        <dbReference type="ChEBI" id="CHEBI:190135"/>
    </ligand>
</feature>
<feature type="binding site" evidence="1">
    <location>
        <position position="259"/>
    </location>
    <ligand>
        <name>[2Fe-2S] cluster</name>
        <dbReference type="ChEBI" id="CHEBI:190135"/>
    </ligand>
</feature>